<accession>Q2KJ51</accession>
<gene>
    <name type="primary">ANGPTL4</name>
</gene>
<name>ANGL4_BOVIN</name>
<feature type="signal peptide" evidence="3">
    <location>
        <begin position="1"/>
        <end position="23"/>
    </location>
</feature>
<feature type="chain" id="PRO_0000244421" description="Angiopoietin-related protein 4">
    <location>
        <begin position="24"/>
        <end position="410"/>
    </location>
</feature>
<feature type="chain" id="PRO_0000446857" description="ANGPTL4 N-terminal chain">
    <location>
        <begin position="24"/>
        <end position="171"/>
    </location>
</feature>
<feature type="chain" id="PRO_0000446858" description="ANGPTL4 C-terminal chain">
    <location>
        <begin position="172"/>
        <end position="410"/>
    </location>
</feature>
<feature type="domain" description="Fibrinogen C-terminal" evidence="4">
    <location>
        <begin position="186"/>
        <end position="408"/>
    </location>
</feature>
<feature type="region of interest" description="Disordered" evidence="5">
    <location>
        <begin position="81"/>
        <end position="106"/>
    </location>
</feature>
<feature type="coiled-coil region" evidence="3">
    <location>
        <begin position="107"/>
        <end position="155"/>
    </location>
</feature>
<feature type="site" description="Cleavage" evidence="1">
    <location>
        <begin position="171"/>
        <end position="172"/>
    </location>
</feature>
<feature type="glycosylation site" description="N-linked (GlcNAc...) asparagine" evidence="3">
    <location>
        <position position="184"/>
    </location>
</feature>
<feature type="disulfide bond" evidence="4">
    <location>
        <begin position="195"/>
        <end position="223"/>
    </location>
</feature>
<feature type="disulfide bond" evidence="4">
    <location>
        <begin position="348"/>
        <end position="361"/>
    </location>
</feature>
<protein>
    <recommendedName>
        <fullName>Angiopoietin-related protein 4</fullName>
    </recommendedName>
    <alternativeName>
        <fullName>Angiopoietin-like protein 4</fullName>
    </alternativeName>
    <component>
        <recommendedName>
            <fullName>ANGPTL4 N-terminal chain</fullName>
        </recommendedName>
    </component>
    <component>
        <recommendedName>
            <fullName>ANGPTL4 C-terminal chain</fullName>
        </recommendedName>
    </component>
</protein>
<comment type="function">
    <text evidence="1 2">Mediates inactivation of the lipoprotein lipase LPL, and thereby plays a role in the regulation of triglyceride clearance from the blood serum and in lipid metabolism. May also play a role in regulating glucose homeostasis and insulin sensitivity. Inhibits proliferation, migration, and tubule formation of endothelial cells and reduces vascular leakage (By similarity). Upon heterologous expression, inhibits the adhesion of endothelial cell to the extracellular matrix (ECM), and inhibits the reorganization of the actin cytoskeleton, formation of actin stress fibers and focal adhesions in endothelial cells that have adhered to ANGPTL4-containing ECM (in vitro) (By similarity). Depending on context, may modulate tumor-related angiogenesis (By similarity).</text>
</comment>
<comment type="function">
    <molecule>ANGPTL4 N-terminal chain</molecule>
    <text evidence="1">Mediates inactivation of the lipoprotein lipase LPL, and thereby plays an important role in the regulation of triglyceride clearance from the blood serum and in lipid metabolism. Has higher activity in LPL inactivation than the uncleaved protein.</text>
</comment>
<comment type="subunit">
    <text evidence="1 2">Homooligomer; disulfide-linked via Cys residues in the N-terminal part of the protein (By similarity). The homooligomer undergoes proteolytic processing to release the ANGPTL4 C-terminal chain, which circulates as a monomer. The homooligomer unprocessed form is able to interact with the extracellular matrix (By similarity).</text>
</comment>
<comment type="subcellular location">
    <subcellularLocation>
        <location evidence="2">Secreted</location>
    </subcellularLocation>
    <subcellularLocation>
        <location evidence="1">Secreted</location>
        <location evidence="1">Extracellular space</location>
        <location evidence="1">Extracellular matrix</location>
    </subcellularLocation>
    <text evidence="1">The unprocessed form interacts with the extracellular matrix. This may constitute a dynamic reservoir, a regulatory mechanism of the bioavailability of ANGPTL4.</text>
</comment>
<comment type="PTM">
    <text evidence="1">N-glycosylated.</text>
</comment>
<comment type="PTM">
    <molecule>ANGPTL4 N-terminal chain</molecule>
    <text evidence="1">Forms disulfide-linked dimers and tetramers.</text>
</comment>
<comment type="PTM">
    <text evidence="1">Cleaved into a smaller N-terminal chain and a larger chain that contains the fibrinogen C-terminal domain; both cleaved and uncleaved forms are detected in the extracellular space. The cleaved form is not present within the cell.</text>
</comment>
<keyword id="KW-0037">Angiogenesis</keyword>
<keyword id="KW-0175">Coiled coil</keyword>
<keyword id="KW-1015">Disulfide bond</keyword>
<keyword id="KW-0272">Extracellular matrix</keyword>
<keyword id="KW-0325">Glycoprotein</keyword>
<keyword id="KW-0443">Lipid metabolism</keyword>
<keyword id="KW-1185">Reference proteome</keyword>
<keyword id="KW-0964">Secreted</keyword>
<keyword id="KW-0732">Signal</keyword>
<dbReference type="EMBL" id="DQ355521">
    <property type="protein sequence ID" value="ABC84490.1"/>
    <property type="molecule type" value="mRNA"/>
</dbReference>
<dbReference type="EMBL" id="BC105516">
    <property type="protein sequence ID" value="AAI05517.1"/>
    <property type="molecule type" value="mRNA"/>
</dbReference>
<dbReference type="RefSeq" id="NP_001039508.1">
    <property type="nucleotide sequence ID" value="NM_001046043.2"/>
</dbReference>
<dbReference type="SMR" id="Q2KJ51"/>
<dbReference type="FunCoup" id="Q2KJ51">
    <property type="interactions" value="197"/>
</dbReference>
<dbReference type="STRING" id="9913.ENSBTAP00000003204"/>
<dbReference type="GlyCosmos" id="Q2KJ51">
    <property type="glycosylation" value="1 site, No reported glycans"/>
</dbReference>
<dbReference type="GlyGen" id="Q2KJ51">
    <property type="glycosylation" value="1 site"/>
</dbReference>
<dbReference type="PaxDb" id="9913-ENSBTAP00000003204"/>
<dbReference type="Ensembl" id="ENSBTAT00000003204.3">
    <property type="protein sequence ID" value="ENSBTAP00000003204.2"/>
    <property type="gene ID" value="ENSBTAG00000002473.4"/>
</dbReference>
<dbReference type="GeneID" id="509963"/>
<dbReference type="KEGG" id="bta:509963"/>
<dbReference type="CTD" id="51129"/>
<dbReference type="VEuPathDB" id="HostDB:ENSBTAG00000002473"/>
<dbReference type="VGNC" id="VGNC:25893">
    <property type="gene designation" value="ANGPTL4"/>
</dbReference>
<dbReference type="eggNOG" id="KOG2579">
    <property type="taxonomic scope" value="Eukaryota"/>
</dbReference>
<dbReference type="GeneTree" id="ENSGT00940000159478"/>
<dbReference type="HOGENOM" id="CLU_038628_2_1_1"/>
<dbReference type="InParanoid" id="Q2KJ51"/>
<dbReference type="OMA" id="MATGFPF"/>
<dbReference type="OrthoDB" id="6145874at2759"/>
<dbReference type="TreeFam" id="TF329953"/>
<dbReference type="Reactome" id="R-BTA-8963889">
    <property type="pathway name" value="Assembly of active LPL and LIPC lipase complexes"/>
</dbReference>
<dbReference type="Reactome" id="R-BTA-9762292">
    <property type="pathway name" value="Regulation of CDH11 function"/>
</dbReference>
<dbReference type="Proteomes" id="UP000009136">
    <property type="component" value="Chromosome 7"/>
</dbReference>
<dbReference type="Bgee" id="ENSBTAG00000002473">
    <property type="expression patterns" value="Expressed in bone marrow and 104 other cell types or tissues"/>
</dbReference>
<dbReference type="GO" id="GO:0062023">
    <property type="term" value="C:collagen-containing extracellular matrix"/>
    <property type="evidence" value="ECO:0000318"/>
    <property type="project" value="GO_Central"/>
</dbReference>
<dbReference type="GO" id="GO:0005615">
    <property type="term" value="C:extracellular space"/>
    <property type="evidence" value="ECO:0000318"/>
    <property type="project" value="GO_Central"/>
</dbReference>
<dbReference type="GO" id="GO:0004857">
    <property type="term" value="F:enzyme inhibitor activity"/>
    <property type="evidence" value="ECO:0000318"/>
    <property type="project" value="GO_Central"/>
</dbReference>
<dbReference type="GO" id="GO:0042802">
    <property type="term" value="F:identical protein binding"/>
    <property type="evidence" value="ECO:0007669"/>
    <property type="project" value="Ensembl"/>
</dbReference>
<dbReference type="GO" id="GO:0035473">
    <property type="term" value="F:lipase binding"/>
    <property type="evidence" value="ECO:0007669"/>
    <property type="project" value="Ensembl"/>
</dbReference>
<dbReference type="GO" id="GO:0055102">
    <property type="term" value="F:lipase inhibitor activity"/>
    <property type="evidence" value="ECO:0007669"/>
    <property type="project" value="Ensembl"/>
</dbReference>
<dbReference type="GO" id="GO:0001525">
    <property type="term" value="P:angiogenesis"/>
    <property type="evidence" value="ECO:0007669"/>
    <property type="project" value="UniProtKB-KW"/>
</dbReference>
<dbReference type="GO" id="GO:0007596">
    <property type="term" value="P:blood coagulation"/>
    <property type="evidence" value="ECO:0007669"/>
    <property type="project" value="InterPro"/>
</dbReference>
<dbReference type="GO" id="GO:0072577">
    <property type="term" value="P:endothelial cell apoptotic process"/>
    <property type="evidence" value="ECO:0007669"/>
    <property type="project" value="Ensembl"/>
</dbReference>
<dbReference type="GO" id="GO:0006629">
    <property type="term" value="P:lipid metabolic process"/>
    <property type="evidence" value="ECO:0007669"/>
    <property type="project" value="UniProtKB-KW"/>
</dbReference>
<dbReference type="GO" id="GO:2000352">
    <property type="term" value="P:negative regulation of endothelial cell apoptotic process"/>
    <property type="evidence" value="ECO:0007669"/>
    <property type="project" value="Ensembl"/>
</dbReference>
<dbReference type="GO" id="GO:0045717">
    <property type="term" value="P:negative regulation of fatty acid biosynthetic process"/>
    <property type="evidence" value="ECO:0007669"/>
    <property type="project" value="Ensembl"/>
</dbReference>
<dbReference type="GO" id="GO:0010903">
    <property type="term" value="P:negative regulation of very-low-density lipoprotein particle remodeling"/>
    <property type="evidence" value="ECO:0007669"/>
    <property type="project" value="Ensembl"/>
</dbReference>
<dbReference type="GO" id="GO:0043335">
    <property type="term" value="P:protein unfolding"/>
    <property type="evidence" value="ECO:0007669"/>
    <property type="project" value="Ensembl"/>
</dbReference>
<dbReference type="GO" id="GO:0090318">
    <property type="term" value="P:regulation of chylomicron remodeling"/>
    <property type="evidence" value="ECO:0007669"/>
    <property type="project" value="Ensembl"/>
</dbReference>
<dbReference type="GO" id="GO:0070328">
    <property type="term" value="P:triglyceride homeostasis"/>
    <property type="evidence" value="ECO:0000318"/>
    <property type="project" value="GO_Central"/>
</dbReference>
<dbReference type="CDD" id="cd00087">
    <property type="entry name" value="FReD"/>
    <property type="match status" value="1"/>
</dbReference>
<dbReference type="FunFam" id="4.10.530.10:FF:000001">
    <property type="entry name" value="angiopoietin-2 isoform X1"/>
    <property type="match status" value="1"/>
</dbReference>
<dbReference type="Gene3D" id="3.90.215.10">
    <property type="entry name" value="Gamma Fibrinogen, chain A, domain 1"/>
    <property type="match status" value="1"/>
</dbReference>
<dbReference type="Gene3D" id="4.10.530.10">
    <property type="entry name" value="Gamma-fibrinogen Carboxyl Terminal Fragment, domain 2"/>
    <property type="match status" value="1"/>
</dbReference>
<dbReference type="InterPro" id="IPR037579">
    <property type="entry name" value="FIB_ANG-like"/>
</dbReference>
<dbReference type="InterPro" id="IPR036056">
    <property type="entry name" value="Fibrinogen-like_C"/>
</dbReference>
<dbReference type="InterPro" id="IPR014716">
    <property type="entry name" value="Fibrinogen_a/b/g_C_1"/>
</dbReference>
<dbReference type="InterPro" id="IPR002181">
    <property type="entry name" value="Fibrinogen_a/b/g_C_dom"/>
</dbReference>
<dbReference type="InterPro" id="IPR020837">
    <property type="entry name" value="Fibrinogen_CS"/>
</dbReference>
<dbReference type="PANTHER" id="PTHR47221">
    <property type="entry name" value="FIBRINOGEN ALPHA CHAIN"/>
    <property type="match status" value="1"/>
</dbReference>
<dbReference type="PANTHER" id="PTHR47221:SF6">
    <property type="entry name" value="FIBRINOGEN ALPHA CHAIN"/>
    <property type="match status" value="1"/>
</dbReference>
<dbReference type="Pfam" id="PF00147">
    <property type="entry name" value="Fibrinogen_C"/>
    <property type="match status" value="1"/>
</dbReference>
<dbReference type="SMART" id="SM00186">
    <property type="entry name" value="FBG"/>
    <property type="match status" value="1"/>
</dbReference>
<dbReference type="SUPFAM" id="SSF56496">
    <property type="entry name" value="Fibrinogen C-terminal domain-like"/>
    <property type="match status" value="1"/>
</dbReference>
<dbReference type="PROSITE" id="PS00514">
    <property type="entry name" value="FIBRINOGEN_C_1"/>
    <property type="match status" value="1"/>
</dbReference>
<dbReference type="PROSITE" id="PS51406">
    <property type="entry name" value="FIBRINOGEN_C_2"/>
    <property type="match status" value="1"/>
</dbReference>
<proteinExistence type="evidence at transcript level"/>
<evidence type="ECO:0000250" key="1">
    <source>
        <dbReference type="UniProtKB" id="Q9BY76"/>
    </source>
</evidence>
<evidence type="ECO:0000250" key="2">
    <source>
        <dbReference type="UniProtKB" id="Q9Z1P8"/>
    </source>
</evidence>
<evidence type="ECO:0000255" key="3"/>
<evidence type="ECO:0000255" key="4">
    <source>
        <dbReference type="PROSITE-ProRule" id="PRU00739"/>
    </source>
</evidence>
<evidence type="ECO:0000256" key="5">
    <source>
        <dbReference type="SAM" id="MobiDB-lite"/>
    </source>
</evidence>
<reference key="1">
    <citation type="submission" date="2005-12" db="EMBL/GenBank/DDBJ databases">
        <authorList>
            <person name="Ma Y."/>
            <person name="Xu S.-Z."/>
            <person name="Zhang Y.-H."/>
            <person name="Gao X."/>
            <person name="Ren H.-Y."/>
            <person name="Xin Y.-P."/>
            <person name="Gao S.-X."/>
        </authorList>
    </citation>
    <scope>NUCLEOTIDE SEQUENCE [MRNA]</scope>
</reference>
<reference key="2">
    <citation type="submission" date="2005-09" db="EMBL/GenBank/DDBJ databases">
        <authorList>
            <consortium name="NIH - Mammalian Gene Collection (MGC) project"/>
        </authorList>
    </citation>
    <scope>NUCLEOTIDE SEQUENCE [LARGE SCALE MRNA]</scope>
    <source>
        <strain>Hereford</strain>
        <tissue>Uterus</tissue>
    </source>
</reference>
<organism>
    <name type="scientific">Bos taurus</name>
    <name type="common">Bovine</name>
    <dbReference type="NCBI Taxonomy" id="9913"/>
    <lineage>
        <taxon>Eukaryota</taxon>
        <taxon>Metazoa</taxon>
        <taxon>Chordata</taxon>
        <taxon>Craniata</taxon>
        <taxon>Vertebrata</taxon>
        <taxon>Euteleostomi</taxon>
        <taxon>Mammalia</taxon>
        <taxon>Eutheria</taxon>
        <taxon>Laurasiatheria</taxon>
        <taxon>Artiodactyla</taxon>
        <taxon>Ruminantia</taxon>
        <taxon>Pecora</taxon>
        <taxon>Bovidae</taxon>
        <taxon>Bovinae</taxon>
        <taxon>Bos</taxon>
    </lineage>
</organism>
<sequence>MRCAPTAGAALMLCAATAGLLSAQGRPEPPETPRFASWDEVNVLAHGLLQLGHGLREHVERTRGQLGELERRLGACGAACKDPEGSAAPPRAQANLVNPGGGDASPETLRSLKTQLEAQNSRIQQLFQKVAQQQRHLEKQQLRIQNLQSQMDHLAPRHLGHEMAKPARRKRLPKMAQLAGPAHNISRLHRLPRDCQELFEEGERESGLFQIQPQGSPPFLVNCKMTSDGGWTVIQRRQDGSVDFNQPWEAYKDGFGDPQGEFWLGLEKVHHILGDRGSRLAVQLQDWEGNAESLQFPIHLGGEDTAYSLQLTPPVASKLGATTFSPSGLSLPFSTWDQDHDLRGDKNCARSLSGGWWFGTCSHSNLNGQYFHSIPRQRQQRKKGIFWKTWRGRYYPLQATTILVQPTAAS</sequence>